<dbReference type="EMBL" id="HG970334">
    <property type="protein sequence ID" value="CEF88089.1"/>
    <property type="molecule type" value="Genomic_DNA"/>
</dbReference>
<dbReference type="RefSeq" id="XP_011325668.1">
    <property type="nucleotide sequence ID" value="XM_011327366.1"/>
</dbReference>
<dbReference type="SMR" id="I1S1W5"/>
<dbReference type="FunCoup" id="I1S1W5">
    <property type="interactions" value="556"/>
</dbReference>
<dbReference type="STRING" id="229533.I1S1W5"/>
<dbReference type="KEGG" id="fgr:FGSG_10740"/>
<dbReference type="VEuPathDB" id="FungiDB:FGRAMPH1_01G20343"/>
<dbReference type="eggNOG" id="KOG1654">
    <property type="taxonomic scope" value="Eukaryota"/>
</dbReference>
<dbReference type="HOGENOM" id="CLU_119276_0_1_1"/>
<dbReference type="InParanoid" id="I1S1W5"/>
<dbReference type="OrthoDB" id="31566at110618"/>
<dbReference type="Proteomes" id="UP000070720">
    <property type="component" value="Chromosome 3"/>
</dbReference>
<dbReference type="GO" id="GO:0000421">
    <property type="term" value="C:autophagosome membrane"/>
    <property type="evidence" value="ECO:0007669"/>
    <property type="project" value="UniProtKB-SubCell"/>
</dbReference>
<dbReference type="GO" id="GO:0033110">
    <property type="term" value="C:Cvt vesicle membrane"/>
    <property type="evidence" value="ECO:0007669"/>
    <property type="project" value="UniProtKB-SubCell"/>
</dbReference>
<dbReference type="GO" id="GO:0006914">
    <property type="term" value="P:autophagy"/>
    <property type="evidence" value="ECO:0007669"/>
    <property type="project" value="UniProtKB-KW"/>
</dbReference>
<dbReference type="GO" id="GO:0015031">
    <property type="term" value="P:protein transport"/>
    <property type="evidence" value="ECO:0007669"/>
    <property type="project" value="UniProtKB-KW"/>
</dbReference>
<dbReference type="CDD" id="cd16128">
    <property type="entry name" value="Ubl_ATG8"/>
    <property type="match status" value="1"/>
</dbReference>
<dbReference type="FunFam" id="3.10.20.90:FF:000010">
    <property type="entry name" value="Autophagy-related protein"/>
    <property type="match status" value="1"/>
</dbReference>
<dbReference type="Gene3D" id="3.10.20.90">
    <property type="entry name" value="Phosphatidylinositol 3-kinase Catalytic Subunit, Chain A, domain 1"/>
    <property type="match status" value="1"/>
</dbReference>
<dbReference type="InterPro" id="IPR004241">
    <property type="entry name" value="Atg8-like"/>
</dbReference>
<dbReference type="InterPro" id="IPR029071">
    <property type="entry name" value="Ubiquitin-like_domsf"/>
</dbReference>
<dbReference type="PANTHER" id="PTHR10969">
    <property type="entry name" value="MICROTUBULE-ASSOCIATED PROTEINS 1A/1B LIGHT CHAIN 3-RELATED"/>
    <property type="match status" value="1"/>
</dbReference>
<dbReference type="Pfam" id="PF02991">
    <property type="entry name" value="ATG8"/>
    <property type="match status" value="1"/>
</dbReference>
<dbReference type="SUPFAM" id="SSF54236">
    <property type="entry name" value="Ubiquitin-like"/>
    <property type="match status" value="1"/>
</dbReference>
<evidence type="ECO:0000250" key="1">
    <source>
        <dbReference type="UniProtKB" id="P38182"/>
    </source>
</evidence>
<evidence type="ECO:0000269" key="2">
    <source>
    </source>
</evidence>
<evidence type="ECO:0000303" key="3">
    <source>
    </source>
</evidence>
<evidence type="ECO:0000305" key="4"/>
<accession>I1S1W5</accession>
<reference key="1">
    <citation type="journal article" date="2007" name="Science">
        <title>The Fusarium graminearum genome reveals a link between localized polymorphism and pathogen specialization.</title>
        <authorList>
            <person name="Cuomo C.A."/>
            <person name="Gueldener U."/>
            <person name="Xu J.-R."/>
            <person name="Trail F."/>
            <person name="Turgeon B.G."/>
            <person name="Di Pietro A."/>
            <person name="Walton J.D."/>
            <person name="Ma L.-J."/>
            <person name="Baker S.E."/>
            <person name="Rep M."/>
            <person name="Adam G."/>
            <person name="Antoniw J."/>
            <person name="Baldwin T."/>
            <person name="Calvo S.E."/>
            <person name="Chang Y.-L."/>
            <person name="DeCaprio D."/>
            <person name="Gale L.R."/>
            <person name="Gnerre S."/>
            <person name="Goswami R.S."/>
            <person name="Hammond-Kosack K."/>
            <person name="Harris L.J."/>
            <person name="Hilburn K."/>
            <person name="Kennell J.C."/>
            <person name="Kroken S."/>
            <person name="Magnuson J.K."/>
            <person name="Mannhaupt G."/>
            <person name="Mauceli E.W."/>
            <person name="Mewes H.-W."/>
            <person name="Mitterbauer R."/>
            <person name="Muehlbauer G."/>
            <person name="Muensterkoetter M."/>
            <person name="Nelson D."/>
            <person name="O'Donnell K."/>
            <person name="Ouellet T."/>
            <person name="Qi W."/>
            <person name="Quesneville H."/>
            <person name="Roncero M.I.G."/>
            <person name="Seong K.-Y."/>
            <person name="Tetko I.V."/>
            <person name="Urban M."/>
            <person name="Waalwijk C."/>
            <person name="Ward T.J."/>
            <person name="Yao J."/>
            <person name="Birren B.W."/>
            <person name="Kistler H.C."/>
        </authorList>
    </citation>
    <scope>NUCLEOTIDE SEQUENCE [LARGE SCALE GENOMIC DNA]</scope>
    <source>
        <strain>ATCC MYA-4620 / CBS 123657 / FGSC 9075 / NRRL 31084 / PH-1</strain>
    </source>
</reference>
<reference key="2">
    <citation type="journal article" date="2010" name="Nature">
        <title>Comparative genomics reveals mobile pathogenicity chromosomes in Fusarium.</title>
        <authorList>
            <person name="Ma L.-J."/>
            <person name="van der Does H.C."/>
            <person name="Borkovich K.A."/>
            <person name="Coleman J.J."/>
            <person name="Daboussi M.-J."/>
            <person name="Di Pietro A."/>
            <person name="Dufresne M."/>
            <person name="Freitag M."/>
            <person name="Grabherr M."/>
            <person name="Henrissat B."/>
            <person name="Houterman P.M."/>
            <person name="Kang S."/>
            <person name="Shim W.-B."/>
            <person name="Woloshuk C."/>
            <person name="Xie X."/>
            <person name="Xu J.-R."/>
            <person name="Antoniw J."/>
            <person name="Baker S.E."/>
            <person name="Bluhm B.H."/>
            <person name="Breakspear A."/>
            <person name="Brown D.W."/>
            <person name="Butchko R.A.E."/>
            <person name="Chapman S."/>
            <person name="Coulson R."/>
            <person name="Coutinho P.M."/>
            <person name="Danchin E.G.J."/>
            <person name="Diener A."/>
            <person name="Gale L.R."/>
            <person name="Gardiner D.M."/>
            <person name="Goff S."/>
            <person name="Hammond-Kosack K.E."/>
            <person name="Hilburn K."/>
            <person name="Hua-Van A."/>
            <person name="Jonkers W."/>
            <person name="Kazan K."/>
            <person name="Kodira C.D."/>
            <person name="Koehrsen M."/>
            <person name="Kumar L."/>
            <person name="Lee Y.-H."/>
            <person name="Li L."/>
            <person name="Manners J.M."/>
            <person name="Miranda-Saavedra D."/>
            <person name="Mukherjee M."/>
            <person name="Park G."/>
            <person name="Park J."/>
            <person name="Park S.-Y."/>
            <person name="Proctor R.H."/>
            <person name="Regev A."/>
            <person name="Ruiz-Roldan M.C."/>
            <person name="Sain D."/>
            <person name="Sakthikumar S."/>
            <person name="Sykes S."/>
            <person name="Schwartz D.C."/>
            <person name="Turgeon B.G."/>
            <person name="Wapinski I."/>
            <person name="Yoder O."/>
            <person name="Young S."/>
            <person name="Zeng Q."/>
            <person name="Zhou S."/>
            <person name="Galagan J."/>
            <person name="Cuomo C.A."/>
            <person name="Kistler H.C."/>
            <person name="Rep M."/>
        </authorList>
    </citation>
    <scope>GENOME REANNOTATION</scope>
    <source>
        <strain>ATCC MYA-4620 / CBS 123657 / FGSC 9075 / NRRL 31084 / PH-1</strain>
    </source>
</reference>
<reference key="3">
    <citation type="journal article" date="2015" name="BMC Genomics">
        <title>The completed genome sequence of the pathogenic ascomycete fungus Fusarium graminearum.</title>
        <authorList>
            <person name="King R."/>
            <person name="Urban M."/>
            <person name="Hammond-Kosack M.C.U."/>
            <person name="Hassani-Pak K."/>
            <person name="Hammond-Kosack K.E."/>
        </authorList>
    </citation>
    <scope>NUCLEOTIDE SEQUENCE [LARGE SCALE GENOMIC DNA]</scope>
    <source>
        <strain>ATCC MYA-4620 / CBS 123657 / FGSC 9075 / NRRL 31084 / PH-1</strain>
    </source>
</reference>
<reference key="4">
    <citation type="journal article" date="2017" name="Sci. Rep.">
        <title>Genome-wide functional analysis reveals that autophagy is necessary for growth, sporulation, deoxynivalenol production and virulence in Fusarium graminearum.</title>
        <authorList>
            <person name="Lv W."/>
            <person name="Wang C."/>
            <person name="Yang N."/>
            <person name="Que Y."/>
            <person name="Talbot N.J."/>
            <person name="Wang Z."/>
        </authorList>
    </citation>
    <scope>IDENTIFICATION</scope>
    <scope>FUNCTION</scope>
    <scope>DISRUPTION PHENOTYPE</scope>
</reference>
<sequence>MRSKFKDEHPFEKRKAEAERIRQKYADRIPVICEKVEKSDIATIDKKKYLVPADLTVGQFVYVIRKRIKLSPEKAIFIFVDEVLPPTAALMSSIYEEHKDEDGFLYITYSGENTFGEA</sequence>
<proteinExistence type="inferred from homology"/>
<keyword id="KW-0072">Autophagy</keyword>
<keyword id="KW-0968">Cytoplasmic vesicle</keyword>
<keyword id="KW-0449">Lipoprotein</keyword>
<keyword id="KW-0472">Membrane</keyword>
<keyword id="KW-0653">Protein transport</keyword>
<keyword id="KW-1185">Reference proteome</keyword>
<keyword id="KW-0813">Transport</keyword>
<keyword id="KW-0833">Ubl conjugation pathway</keyword>
<keyword id="KW-0926">Vacuole</keyword>
<protein>
    <recommendedName>
        <fullName evidence="3">Autophagy-related protein 8</fullName>
    </recommendedName>
    <alternativeName>
        <fullName evidence="1">Autophagy-related ubiquitin-like modifier ATG8</fullName>
    </alternativeName>
</protein>
<gene>
    <name evidence="3" type="primary">ATG8</name>
    <name type="ORF">FG10740</name>
    <name type="ORF">FGRAMPH1_01T20343</name>
</gene>
<comment type="function">
    <text evidence="1 2">Ubiquitin-like modifier involved in cytoplasm to vacuole transport (Cvt) vesicles and autophagosome formation (By similarity). With ATG4, mediates the delivery of the vesicles and autophagosomes to the vacuole via the microtubule cytoskeleton (By similarity). Required for selective autophagic degradation of the nucleus (nucleophagy) as well as for mitophagy which contributes to regulate mitochondrial quantity and quality by eliminating the mitochondria to a basal level to fulfill cellular energy requirements and preventing excess ROS production (By similarity). Also participates in membrane fusion events that take place in the early secretory pathway (By similarity). Also involved in endoplasmic reticulum-specific autophagic process and is essential for the survival of cells subjected to severe ER stress (By similarity). The ATG8-PE conjugate mediates tethering between adjacent membranes and stimulates membrane hemifusion, leading to expansion of the autophagosomal membrane during autophagy (By similarity). Moreover not only conjugation, but also subsequent ATG8-PE deconjugation is an important step required to facilitate multiple events during macroautophagy, and especially for efficient autophagosome biogenesis, the assembly of ATG9-containing tubulovesicular clusters into phagophores/autophagosomes, and for the disassembly of PAS-associated ATG components (By similarity). Autophagy is required for proper vegetative growth, asexual/sexual reproduction, and full virulence (PubMed:28894236). Autophagy is particularly involved in the biosynthesis of deoxynivalenol (DON), an important virulence determinant (PubMed:28894236).</text>
</comment>
<comment type="subunit">
    <text evidence="1">Conjugation to phosphatidylethanolamine (PE) leads to homodimerization (By similarity). Interacts with ATG1, ATG3, ATG4, ATG7 and ATG12 (By similarity).</text>
</comment>
<comment type="subcellular location">
    <subcellularLocation>
        <location evidence="1">Cytoplasmic vesicle</location>
        <location evidence="1">Cvt vesicle membrane</location>
        <topology evidence="1">Lipid-anchor</topology>
    </subcellularLocation>
    <subcellularLocation>
        <location evidence="1">Cytoplasmic vesicle</location>
        <location evidence="1">Autophagosome membrane</location>
        <topology evidence="1">Lipid-anchor</topology>
    </subcellularLocation>
    <subcellularLocation>
        <location evidence="1">Vacuole membrane</location>
        <topology evidence="1">Lipid-anchor</topology>
    </subcellularLocation>
    <text evidence="1">Membrane-associated through a lipid anchor (By similarity). This association needs the 2 ubiquitin-like systems required for cytoplasm to vacuole transport and autophagy (By similarity). Localizes to both the isolation membrane (IM) and the vacuole-isolation membrane contact site (VICS) during IM expansion (By similarity). The IM is a membrane sac generated from the pre-autophagosomal structure that ultimately expands to become a mature autophagosome (By similarity).</text>
</comment>
<comment type="PTM">
    <text evidence="1">The C-terminal Glu-117 and Ala-118 residues of ATG8 are removed by ATG4 to expose Gly-116 at the C-terminus (By similarity). This Gly-116 forms then a thioester bond with the 'Cys-550' of ATG7 (E1-like activating enzyme) before being transferred to the 'Cys-244' of ATG3 (the specific E2 conjugating enzyme), in order to be finally amidated with phosphatidylethanolamine (By similarity). This lipid modification anchors ATG8 to membranes and can be reversed by ATG4, releasing soluble ATG8 (By similarity).</text>
</comment>
<comment type="disruption phenotype">
    <text evidence="2">Significantly decreases the radial growth of colonies under nutrient-rich conditions (PubMed:28894236). Strongly reduces conidiation (PubMed:28894236). Also reduces strongly the production of deoxynivalenol (DON), an important virulence determinant (PubMed:28894236).</text>
</comment>
<comment type="similarity">
    <text evidence="4">Belongs to the ATG8 family.</text>
</comment>
<name>ATG8_GIBZE</name>
<feature type="chain" id="PRO_0000443885" description="Autophagy-related protein 8">
    <location>
        <begin position="1"/>
        <end position="118"/>
    </location>
</feature>
<feature type="propeptide" id="PRO_0000443886" description="Removed in mature form" evidence="1">
    <location>
        <begin position="117"/>
        <end position="118"/>
    </location>
</feature>
<feature type="site" description="Cleavage; by ATG4" evidence="1">
    <location>
        <begin position="116"/>
        <end position="117"/>
    </location>
</feature>
<feature type="lipid moiety-binding region" description="Phosphatidylethanolamine amidated glycine" evidence="1">
    <location>
        <position position="116"/>
    </location>
</feature>
<organism>
    <name type="scientific">Gibberella zeae (strain ATCC MYA-4620 / CBS 123657 / FGSC 9075 / NRRL 31084 / PH-1)</name>
    <name type="common">Wheat head blight fungus</name>
    <name type="synonym">Fusarium graminearum</name>
    <dbReference type="NCBI Taxonomy" id="229533"/>
    <lineage>
        <taxon>Eukaryota</taxon>
        <taxon>Fungi</taxon>
        <taxon>Dikarya</taxon>
        <taxon>Ascomycota</taxon>
        <taxon>Pezizomycotina</taxon>
        <taxon>Sordariomycetes</taxon>
        <taxon>Hypocreomycetidae</taxon>
        <taxon>Hypocreales</taxon>
        <taxon>Nectriaceae</taxon>
        <taxon>Fusarium</taxon>
    </lineage>
</organism>